<dbReference type="EC" id="2.3.1.117" evidence="1"/>
<dbReference type="EMBL" id="CP000116">
    <property type="protein sequence ID" value="AAZ97173.1"/>
    <property type="molecule type" value="Genomic_DNA"/>
</dbReference>
<dbReference type="RefSeq" id="WP_011311732.1">
    <property type="nucleotide sequence ID" value="NC_007404.1"/>
</dbReference>
<dbReference type="SMR" id="Q3SJI4"/>
<dbReference type="STRING" id="292415.Tbd_1220"/>
<dbReference type="KEGG" id="tbd:Tbd_1220"/>
<dbReference type="eggNOG" id="COG2171">
    <property type="taxonomic scope" value="Bacteria"/>
</dbReference>
<dbReference type="HOGENOM" id="CLU_050859_0_1_4"/>
<dbReference type="OrthoDB" id="9775362at2"/>
<dbReference type="UniPathway" id="UPA00034">
    <property type="reaction ID" value="UER00019"/>
</dbReference>
<dbReference type="Proteomes" id="UP000008291">
    <property type="component" value="Chromosome"/>
</dbReference>
<dbReference type="GO" id="GO:0005737">
    <property type="term" value="C:cytoplasm"/>
    <property type="evidence" value="ECO:0007669"/>
    <property type="project" value="UniProtKB-SubCell"/>
</dbReference>
<dbReference type="GO" id="GO:0008666">
    <property type="term" value="F:2,3,4,5-tetrahydropyridine-2,6-dicarboxylate N-succinyltransferase activity"/>
    <property type="evidence" value="ECO:0007669"/>
    <property type="project" value="UniProtKB-UniRule"/>
</dbReference>
<dbReference type="GO" id="GO:0016779">
    <property type="term" value="F:nucleotidyltransferase activity"/>
    <property type="evidence" value="ECO:0007669"/>
    <property type="project" value="TreeGrafter"/>
</dbReference>
<dbReference type="GO" id="GO:0019877">
    <property type="term" value="P:diaminopimelate biosynthetic process"/>
    <property type="evidence" value="ECO:0007669"/>
    <property type="project" value="UniProtKB-UniRule"/>
</dbReference>
<dbReference type="GO" id="GO:0009089">
    <property type="term" value="P:lysine biosynthetic process via diaminopimelate"/>
    <property type="evidence" value="ECO:0007669"/>
    <property type="project" value="UniProtKB-UniRule"/>
</dbReference>
<dbReference type="CDD" id="cd03350">
    <property type="entry name" value="LbH_THP_succinylT"/>
    <property type="match status" value="1"/>
</dbReference>
<dbReference type="Gene3D" id="2.160.10.10">
    <property type="entry name" value="Hexapeptide repeat proteins"/>
    <property type="match status" value="1"/>
</dbReference>
<dbReference type="Gene3D" id="1.10.166.10">
    <property type="entry name" value="Tetrahydrodipicolinate-N-succinyltransferase, N-terminal domain"/>
    <property type="match status" value="1"/>
</dbReference>
<dbReference type="HAMAP" id="MF_00811">
    <property type="entry name" value="DapD"/>
    <property type="match status" value="1"/>
</dbReference>
<dbReference type="InterPro" id="IPR005664">
    <property type="entry name" value="DapD_Trfase_Hexpep_rpt_fam"/>
</dbReference>
<dbReference type="InterPro" id="IPR001451">
    <property type="entry name" value="Hexapep"/>
</dbReference>
<dbReference type="InterPro" id="IPR018357">
    <property type="entry name" value="Hexapep_transf_CS"/>
</dbReference>
<dbReference type="InterPro" id="IPR023180">
    <property type="entry name" value="THP_succinylTrfase_dom1"/>
</dbReference>
<dbReference type="InterPro" id="IPR037133">
    <property type="entry name" value="THP_succinylTrfase_N_sf"/>
</dbReference>
<dbReference type="InterPro" id="IPR011004">
    <property type="entry name" value="Trimer_LpxA-like_sf"/>
</dbReference>
<dbReference type="NCBIfam" id="TIGR00965">
    <property type="entry name" value="dapD"/>
    <property type="match status" value="1"/>
</dbReference>
<dbReference type="NCBIfam" id="NF008808">
    <property type="entry name" value="PRK11830.1"/>
    <property type="match status" value="1"/>
</dbReference>
<dbReference type="PANTHER" id="PTHR19136:SF52">
    <property type="entry name" value="2,3,4,5-TETRAHYDROPYRIDINE-2,6-DICARBOXYLATE N-SUCCINYLTRANSFERASE"/>
    <property type="match status" value="1"/>
</dbReference>
<dbReference type="PANTHER" id="PTHR19136">
    <property type="entry name" value="MOLYBDENUM COFACTOR GUANYLYLTRANSFERASE"/>
    <property type="match status" value="1"/>
</dbReference>
<dbReference type="Pfam" id="PF14602">
    <property type="entry name" value="Hexapep_2"/>
    <property type="match status" value="1"/>
</dbReference>
<dbReference type="Pfam" id="PF14805">
    <property type="entry name" value="THDPS_N_2"/>
    <property type="match status" value="1"/>
</dbReference>
<dbReference type="SUPFAM" id="SSF51161">
    <property type="entry name" value="Trimeric LpxA-like enzymes"/>
    <property type="match status" value="1"/>
</dbReference>
<dbReference type="PROSITE" id="PS00101">
    <property type="entry name" value="HEXAPEP_TRANSFERASES"/>
    <property type="match status" value="1"/>
</dbReference>
<sequence length="274" mass="29717">MQELQPIIEEAFERRADITPRNATPQVKDAVMAVIDLLDMGQLRVAERTDGQNWTTNQWVKKAVLLSFRLEDNAFIKGGYTNYYDKVPSKFADFNSKDFREGGFRVVPPAAARKGSYIGKNVVLMPSYVNIGAYVDEGTMVDTWATVGSCAQIGKNVHLSGGVGIGGVLEPVQANPTIIGDNCFIGARSEVVEGVIVEDNCVISMGVYIGQSTKIYDRETGEIHYGRVPAGSVVVSGNLPSKDGSYSLYCAVIVKKVDAKTLSKVGINELLRGI</sequence>
<accession>Q3SJI4</accession>
<protein>
    <recommendedName>
        <fullName evidence="1">2,3,4,5-tetrahydropyridine-2,6-dicarboxylate N-succinyltransferase</fullName>
        <ecNumber evidence="1">2.3.1.117</ecNumber>
    </recommendedName>
    <alternativeName>
        <fullName evidence="1">Tetrahydrodipicolinate N-succinyltransferase</fullName>
        <shortName evidence="1">THDP succinyltransferase</shortName>
        <shortName evidence="1">THP succinyltransferase</shortName>
        <shortName evidence="1">Tetrahydropicolinate succinylase</shortName>
    </alternativeName>
</protein>
<reference key="1">
    <citation type="journal article" date="2006" name="J. Bacteriol.">
        <title>The genome sequence of the obligately chemolithoautotrophic, facultatively anaerobic bacterium Thiobacillus denitrificans.</title>
        <authorList>
            <person name="Beller H.R."/>
            <person name="Chain P.S."/>
            <person name="Letain T.E."/>
            <person name="Chakicherla A."/>
            <person name="Larimer F.W."/>
            <person name="Richardson P.M."/>
            <person name="Coleman M.A."/>
            <person name="Wood A.P."/>
            <person name="Kelly D.P."/>
        </authorList>
    </citation>
    <scope>NUCLEOTIDE SEQUENCE [LARGE SCALE GENOMIC DNA]</scope>
    <source>
        <strain>ATCC 25259 / T1</strain>
    </source>
</reference>
<evidence type="ECO:0000255" key="1">
    <source>
        <dbReference type="HAMAP-Rule" id="MF_00811"/>
    </source>
</evidence>
<keyword id="KW-0012">Acyltransferase</keyword>
<keyword id="KW-0028">Amino-acid biosynthesis</keyword>
<keyword id="KW-0963">Cytoplasm</keyword>
<keyword id="KW-0220">Diaminopimelate biosynthesis</keyword>
<keyword id="KW-0457">Lysine biosynthesis</keyword>
<keyword id="KW-1185">Reference proteome</keyword>
<keyword id="KW-0677">Repeat</keyword>
<keyword id="KW-0808">Transferase</keyword>
<feature type="chain" id="PRO_1000047197" description="2,3,4,5-tetrahydropyridine-2,6-dicarboxylate N-succinyltransferase">
    <location>
        <begin position="1"/>
        <end position="274"/>
    </location>
</feature>
<feature type="binding site" evidence="1">
    <location>
        <position position="105"/>
    </location>
    <ligand>
        <name>substrate</name>
    </ligand>
</feature>
<feature type="binding site" evidence="1">
    <location>
        <position position="142"/>
    </location>
    <ligand>
        <name>substrate</name>
    </ligand>
</feature>
<proteinExistence type="inferred from homology"/>
<name>DAPD_THIDA</name>
<gene>
    <name evidence="1" type="primary">dapD</name>
    <name type="ordered locus">Tbd_1220</name>
</gene>
<comment type="catalytic activity">
    <reaction evidence="1">
        <text>(S)-2,3,4,5-tetrahydrodipicolinate + succinyl-CoA + H2O = (S)-2-succinylamino-6-oxoheptanedioate + CoA</text>
        <dbReference type="Rhea" id="RHEA:17325"/>
        <dbReference type="ChEBI" id="CHEBI:15377"/>
        <dbReference type="ChEBI" id="CHEBI:15685"/>
        <dbReference type="ChEBI" id="CHEBI:16845"/>
        <dbReference type="ChEBI" id="CHEBI:57287"/>
        <dbReference type="ChEBI" id="CHEBI:57292"/>
        <dbReference type="EC" id="2.3.1.117"/>
    </reaction>
</comment>
<comment type="pathway">
    <text evidence="1">Amino-acid biosynthesis; L-lysine biosynthesis via DAP pathway; LL-2,6-diaminopimelate from (S)-tetrahydrodipicolinate (succinylase route): step 1/3.</text>
</comment>
<comment type="subunit">
    <text evidence="1">Homotrimer.</text>
</comment>
<comment type="subcellular location">
    <subcellularLocation>
        <location evidence="1">Cytoplasm</location>
    </subcellularLocation>
</comment>
<comment type="similarity">
    <text evidence="1">Belongs to the transferase hexapeptide repeat family.</text>
</comment>
<organism>
    <name type="scientific">Thiobacillus denitrificans (strain ATCC 25259 / T1)</name>
    <dbReference type="NCBI Taxonomy" id="292415"/>
    <lineage>
        <taxon>Bacteria</taxon>
        <taxon>Pseudomonadati</taxon>
        <taxon>Pseudomonadota</taxon>
        <taxon>Betaproteobacteria</taxon>
        <taxon>Nitrosomonadales</taxon>
        <taxon>Thiobacillaceae</taxon>
        <taxon>Thiobacillus</taxon>
    </lineage>
</organism>